<protein>
    <recommendedName>
        <fullName>Homeobox protein knotted-1-like 3</fullName>
    </recommendedName>
</protein>
<organism>
    <name type="scientific">Zea mays</name>
    <name type="common">Maize</name>
    <dbReference type="NCBI Taxonomy" id="4577"/>
    <lineage>
        <taxon>Eukaryota</taxon>
        <taxon>Viridiplantae</taxon>
        <taxon>Streptophyta</taxon>
        <taxon>Embryophyta</taxon>
        <taxon>Tracheophyta</taxon>
        <taxon>Spermatophyta</taxon>
        <taxon>Magnoliopsida</taxon>
        <taxon>Liliopsida</taxon>
        <taxon>Poales</taxon>
        <taxon>Poaceae</taxon>
        <taxon>PACMAD clade</taxon>
        <taxon>Panicoideae</taxon>
        <taxon>Andropogonodae</taxon>
        <taxon>Andropogoneae</taxon>
        <taxon>Tripsacinae</taxon>
        <taxon>Zea</taxon>
    </lineage>
</organism>
<dbReference type="SMR" id="P56661"/>
<dbReference type="STRING" id="4577.P56661"/>
<dbReference type="InParanoid" id="P56661"/>
<dbReference type="Proteomes" id="UP000007305">
    <property type="component" value="Unplaced"/>
</dbReference>
<dbReference type="ExpressionAtlas" id="P56661">
    <property type="expression patterns" value="baseline and differential"/>
</dbReference>
<dbReference type="GO" id="GO:0005634">
    <property type="term" value="C:nucleus"/>
    <property type="evidence" value="ECO:0000318"/>
    <property type="project" value="GO_Central"/>
</dbReference>
<dbReference type="GO" id="GO:0003677">
    <property type="term" value="F:DNA binding"/>
    <property type="evidence" value="ECO:0007669"/>
    <property type="project" value="UniProtKB-KW"/>
</dbReference>
<dbReference type="GO" id="GO:0000981">
    <property type="term" value="F:DNA-binding transcription factor activity, RNA polymerase II-specific"/>
    <property type="evidence" value="ECO:0007669"/>
    <property type="project" value="InterPro"/>
</dbReference>
<dbReference type="CDD" id="cd00086">
    <property type="entry name" value="homeodomain"/>
    <property type="match status" value="1"/>
</dbReference>
<dbReference type="Gene3D" id="1.10.10.60">
    <property type="entry name" value="Homeodomain-like"/>
    <property type="match status" value="1"/>
</dbReference>
<dbReference type="InterPro" id="IPR005539">
    <property type="entry name" value="ELK_dom"/>
</dbReference>
<dbReference type="InterPro" id="IPR001356">
    <property type="entry name" value="HD"/>
</dbReference>
<dbReference type="InterPro" id="IPR017970">
    <property type="entry name" value="Homeobox_CS"/>
</dbReference>
<dbReference type="InterPro" id="IPR009057">
    <property type="entry name" value="Homeodomain-like_sf"/>
</dbReference>
<dbReference type="InterPro" id="IPR008422">
    <property type="entry name" value="KN_HD"/>
</dbReference>
<dbReference type="InterPro" id="IPR050224">
    <property type="entry name" value="TALE_homeobox"/>
</dbReference>
<dbReference type="PANTHER" id="PTHR11850">
    <property type="entry name" value="HOMEOBOX PROTEIN TRANSCRIPTION FACTORS"/>
    <property type="match status" value="1"/>
</dbReference>
<dbReference type="Pfam" id="PF03789">
    <property type="entry name" value="ELK"/>
    <property type="match status" value="1"/>
</dbReference>
<dbReference type="Pfam" id="PF05920">
    <property type="entry name" value="Homeobox_KN"/>
    <property type="match status" value="1"/>
</dbReference>
<dbReference type="SMART" id="SM01188">
    <property type="entry name" value="ELK"/>
    <property type="match status" value="1"/>
</dbReference>
<dbReference type="SMART" id="SM00389">
    <property type="entry name" value="HOX"/>
    <property type="match status" value="1"/>
</dbReference>
<dbReference type="SUPFAM" id="SSF46689">
    <property type="entry name" value="Homeodomain-like"/>
    <property type="match status" value="1"/>
</dbReference>
<dbReference type="PROSITE" id="PS51213">
    <property type="entry name" value="ELK"/>
    <property type="match status" value="1"/>
</dbReference>
<dbReference type="PROSITE" id="PS00027">
    <property type="entry name" value="HOMEOBOX_1"/>
    <property type="match status" value="1"/>
</dbReference>
<dbReference type="PROSITE" id="PS50071">
    <property type="entry name" value="HOMEOBOX_2"/>
    <property type="match status" value="1"/>
</dbReference>
<name>KNOX3_MAIZE</name>
<gene>
    <name type="primary">KNOX3</name>
</gene>
<comment type="function">
    <text>Probably binds to the DNA sequence 5'-TGAC-3'.</text>
</comment>
<comment type="subcellular location">
    <subcellularLocation>
        <location evidence="3">Nucleus</location>
    </subcellularLocation>
</comment>
<comment type="tissue specificity">
    <text>Strongly expressed in ear inflorescence primordia and shoot meristem. Weakly expressed in embryos. Absent from leaves.</text>
</comment>
<comment type="similarity">
    <text evidence="2">Belongs to the TALE/KNOX homeobox family.</text>
</comment>
<keyword id="KW-0238">DNA-binding</keyword>
<keyword id="KW-0371">Homeobox</keyword>
<keyword id="KW-0539">Nucleus</keyword>
<keyword id="KW-1185">Reference proteome</keyword>
<accession>P56661</accession>
<proteinExistence type="evidence at transcript level"/>
<sequence>DDKELKKQLLRKYSGCLGNLRKELCKKRKKDKLPKEARQKLLSWWELHYRWPYPSEMEKIALAESTGLEQKQINNWFINQRKRHWKPS</sequence>
<feature type="chain" id="PRO_0000048964" description="Homeobox protein knotted-1-like 3">
    <location>
        <begin position="1" status="less than"/>
        <end position="88" status="greater than"/>
    </location>
</feature>
<feature type="domain" description="ELK" evidence="2">
    <location>
        <begin position="4"/>
        <end position="24"/>
    </location>
</feature>
<feature type="DNA-binding region" description="Homeobox; TALE-type" evidence="1">
    <location>
        <begin position="25"/>
        <end position="88"/>
    </location>
</feature>
<feature type="non-terminal residue">
    <location>
        <position position="1"/>
    </location>
</feature>
<feature type="non-terminal residue">
    <location>
        <position position="88"/>
    </location>
</feature>
<reference key="1">
    <citation type="journal article" date="1994" name="Plant Cell">
        <title>Sequence analysis and expression patterns divide the Maize knotted1-like homeobox genes into two classes.</title>
        <authorList>
            <person name="Kerstetter R."/>
            <person name="Vollbrecht E."/>
            <person name="Lowe B."/>
            <person name="Veit B."/>
            <person name="Yamaguchi J."/>
            <person name="Hake S."/>
        </authorList>
    </citation>
    <scope>NUCLEOTIDE SEQUENCE</scope>
    <source>
        <tissue>Ear of corn</tissue>
        <tissue>Seedling</tissue>
    </source>
</reference>
<evidence type="ECO:0000255" key="1">
    <source>
        <dbReference type="PROSITE-ProRule" id="PRU00108"/>
    </source>
</evidence>
<evidence type="ECO:0000255" key="2">
    <source>
        <dbReference type="PROSITE-ProRule" id="PRU00559"/>
    </source>
</evidence>
<evidence type="ECO:0000305" key="3"/>